<dbReference type="EC" id="3.4.11.14"/>
<dbReference type="EMBL" id="Y07701">
    <property type="protein sequence ID" value="CAA68964.1"/>
    <property type="status" value="ALT_INIT"/>
    <property type="molecule type" value="mRNA"/>
</dbReference>
<dbReference type="EMBL" id="AK296887">
    <property type="protein sequence ID" value="BAH12449.1"/>
    <property type="molecule type" value="mRNA"/>
</dbReference>
<dbReference type="EMBL" id="AC025682">
    <property type="status" value="NOT_ANNOTATED_CDS"/>
    <property type="molecule type" value="Genomic_DNA"/>
</dbReference>
<dbReference type="EMBL" id="BC065294">
    <property type="protein sequence ID" value="AAH65294.2"/>
    <property type="status" value="ALT_INIT"/>
    <property type="molecule type" value="mRNA"/>
</dbReference>
<dbReference type="EMBL" id="AJ132583">
    <property type="protein sequence ID" value="CAA10709.1"/>
    <property type="molecule type" value="mRNA"/>
</dbReference>
<dbReference type="EMBL" id="AF252387">
    <property type="protein sequence ID" value="AAF70086.1"/>
    <property type="molecule type" value="Genomic_DNA"/>
</dbReference>
<dbReference type="CCDS" id="CCDS45721.1">
    <molecule id="P55786-1"/>
</dbReference>
<dbReference type="RefSeq" id="NP_001317186.1">
    <property type="nucleotide sequence ID" value="NM_001330257.1"/>
</dbReference>
<dbReference type="RefSeq" id="NP_006301.3">
    <molecule id="P55786-1"/>
    <property type="nucleotide sequence ID" value="NM_006310.3"/>
</dbReference>
<dbReference type="PDB" id="8SW0">
    <property type="method" value="X-ray"/>
    <property type="resolution" value="2.30 A"/>
    <property type="chains" value="A=46-919"/>
</dbReference>
<dbReference type="PDB" id="8SW1">
    <property type="method" value="X-ray"/>
    <property type="resolution" value="3.65 A"/>
    <property type="chains" value="A=46-919"/>
</dbReference>
<dbReference type="PDBsum" id="8SW0"/>
<dbReference type="PDBsum" id="8SW1"/>
<dbReference type="SMR" id="P55786"/>
<dbReference type="BioGRID" id="114897">
    <property type="interactions" value="188"/>
</dbReference>
<dbReference type="FunCoup" id="P55786">
    <property type="interactions" value="1782"/>
</dbReference>
<dbReference type="IntAct" id="P55786">
    <property type="interactions" value="49"/>
</dbReference>
<dbReference type="MINT" id="P55786"/>
<dbReference type="STRING" id="9606.ENSP00000320324"/>
<dbReference type="BindingDB" id="P55786"/>
<dbReference type="ChEMBL" id="CHEMBL2264"/>
<dbReference type="DrugBank" id="DB11638">
    <property type="generic name" value="Artenimol"/>
</dbReference>
<dbReference type="DrugBank" id="DB11781">
    <property type="generic name" value="Tosedostat"/>
</dbReference>
<dbReference type="DrugCentral" id="P55786"/>
<dbReference type="GuidetoPHARMACOLOGY" id="1575"/>
<dbReference type="MEROPS" id="M01.010"/>
<dbReference type="GlyCosmos" id="P55786">
    <property type="glycosylation" value="1 site, 1 glycan"/>
</dbReference>
<dbReference type="GlyGen" id="P55786">
    <property type="glycosylation" value="2 sites, 1 O-linked glycan (1 site)"/>
</dbReference>
<dbReference type="iPTMnet" id="P55786"/>
<dbReference type="MetOSite" id="P55786"/>
<dbReference type="PhosphoSitePlus" id="P55786"/>
<dbReference type="SwissPalm" id="P55786"/>
<dbReference type="BioMuta" id="NPEPPS"/>
<dbReference type="DMDM" id="51704228"/>
<dbReference type="CPTAC" id="CPTAC-415"/>
<dbReference type="CPTAC" id="CPTAC-416"/>
<dbReference type="jPOST" id="P55786"/>
<dbReference type="MassIVE" id="P55786"/>
<dbReference type="PaxDb" id="9606-ENSP00000320324"/>
<dbReference type="PeptideAtlas" id="P55786"/>
<dbReference type="PRIDE" id="P55786"/>
<dbReference type="ProteomicsDB" id="56864">
    <molecule id="P55786-1"/>
</dbReference>
<dbReference type="ProteomicsDB" id="6572"/>
<dbReference type="Pumba" id="P55786"/>
<dbReference type="Antibodypedia" id="8552">
    <property type="antibodies" value="267 antibodies from 28 providers"/>
</dbReference>
<dbReference type="DNASU" id="9520"/>
<dbReference type="Ensembl" id="ENST00000322157.9">
    <molecule id="P55786-1"/>
    <property type="protein sequence ID" value="ENSP00000320324.4"/>
    <property type="gene ID" value="ENSG00000141279.18"/>
</dbReference>
<dbReference type="Ensembl" id="ENST00000677120.1">
    <molecule id="P55786-1"/>
    <property type="protein sequence ID" value="ENSP00000503682.1"/>
    <property type="gene ID" value="ENSG00000141279.18"/>
</dbReference>
<dbReference type="GeneID" id="9520"/>
<dbReference type="KEGG" id="hsa:9520"/>
<dbReference type="MANE-Select" id="ENST00000322157.9">
    <property type="protein sequence ID" value="ENSP00000320324.4"/>
    <property type="RefSeq nucleotide sequence ID" value="NM_006310.4"/>
    <property type="RefSeq protein sequence ID" value="NP_006301.3"/>
</dbReference>
<dbReference type="UCSC" id="uc002ilr.5">
    <molecule id="P55786-1"/>
    <property type="organism name" value="human"/>
</dbReference>
<dbReference type="AGR" id="HGNC:7900"/>
<dbReference type="CTD" id="9520"/>
<dbReference type="DisGeNET" id="9520"/>
<dbReference type="GeneCards" id="NPEPPS"/>
<dbReference type="HGNC" id="HGNC:7900">
    <property type="gene designation" value="NPEPPS"/>
</dbReference>
<dbReference type="HPA" id="ENSG00000141279">
    <property type="expression patterns" value="Low tissue specificity"/>
</dbReference>
<dbReference type="MalaCards" id="NPEPPS"/>
<dbReference type="MIM" id="606793">
    <property type="type" value="gene"/>
</dbReference>
<dbReference type="neXtProt" id="NX_P55786"/>
<dbReference type="OpenTargets" id="ENSG00000141279"/>
<dbReference type="PharmGKB" id="PA31703"/>
<dbReference type="VEuPathDB" id="HostDB:ENSG00000141279"/>
<dbReference type="eggNOG" id="KOG1046">
    <property type="taxonomic scope" value="Eukaryota"/>
</dbReference>
<dbReference type="GeneTree" id="ENSGT00940000155246"/>
<dbReference type="HOGENOM" id="CLU_003705_0_1_1"/>
<dbReference type="InParanoid" id="P55786"/>
<dbReference type="OMA" id="MMEYVAI"/>
<dbReference type="OrthoDB" id="9477414at2759"/>
<dbReference type="PAN-GO" id="P55786">
    <property type="GO annotations" value="6 GO annotations based on evolutionary models"/>
</dbReference>
<dbReference type="PhylomeDB" id="P55786"/>
<dbReference type="TreeFam" id="TF300395"/>
<dbReference type="PathwayCommons" id="P55786"/>
<dbReference type="Reactome" id="R-HSA-983168">
    <property type="pathway name" value="Antigen processing: Ubiquitination &amp; Proteasome degradation"/>
</dbReference>
<dbReference type="SABIO-RK" id="P55786"/>
<dbReference type="SignaLink" id="P55786"/>
<dbReference type="SIGNOR" id="P55786"/>
<dbReference type="BioGRID-ORCS" id="9520">
    <property type="hits" value="280 hits in 1160 CRISPR screens"/>
</dbReference>
<dbReference type="CD-CODE" id="FB4E32DD">
    <property type="entry name" value="Presynaptic clusters and postsynaptic densities"/>
</dbReference>
<dbReference type="ChiTaRS" id="NPEPPS">
    <property type="organism name" value="human"/>
</dbReference>
<dbReference type="GeneWiki" id="NPEPPS"/>
<dbReference type="GenomeRNAi" id="9520"/>
<dbReference type="Pharos" id="P55786">
    <property type="development level" value="Tchem"/>
</dbReference>
<dbReference type="PRO" id="PR:P55786"/>
<dbReference type="Proteomes" id="UP000005640">
    <property type="component" value="Chromosome 17"/>
</dbReference>
<dbReference type="RNAct" id="P55786">
    <property type="molecule type" value="protein"/>
</dbReference>
<dbReference type="Bgee" id="ENSG00000141279">
    <property type="expression patterns" value="Expressed in esophagus squamous epithelium and 203 other cell types or tissues"/>
</dbReference>
<dbReference type="ExpressionAtlas" id="P55786">
    <property type="expression patterns" value="baseline and differential"/>
</dbReference>
<dbReference type="GO" id="GO:0005737">
    <property type="term" value="C:cytoplasm"/>
    <property type="evidence" value="ECO:0000318"/>
    <property type="project" value="GO_Central"/>
</dbReference>
<dbReference type="GO" id="GO:0005829">
    <property type="term" value="C:cytosol"/>
    <property type="evidence" value="ECO:0000314"/>
    <property type="project" value="HPA"/>
</dbReference>
<dbReference type="GO" id="GO:0070062">
    <property type="term" value="C:extracellular exosome"/>
    <property type="evidence" value="ECO:0007005"/>
    <property type="project" value="UniProtKB"/>
</dbReference>
<dbReference type="GO" id="GO:0005615">
    <property type="term" value="C:extracellular space"/>
    <property type="evidence" value="ECO:0000318"/>
    <property type="project" value="GO_Central"/>
</dbReference>
<dbReference type="GO" id="GO:0016020">
    <property type="term" value="C:membrane"/>
    <property type="evidence" value="ECO:0000318"/>
    <property type="project" value="GO_Central"/>
</dbReference>
<dbReference type="GO" id="GO:0005634">
    <property type="term" value="C:nucleus"/>
    <property type="evidence" value="ECO:0007669"/>
    <property type="project" value="UniProtKB-SubCell"/>
</dbReference>
<dbReference type="GO" id="GO:0016285">
    <property type="term" value="F:alanyl aminopeptidase activity"/>
    <property type="evidence" value="ECO:0007669"/>
    <property type="project" value="UniProtKB-EC"/>
</dbReference>
<dbReference type="GO" id="GO:0004177">
    <property type="term" value="F:aminopeptidase activity"/>
    <property type="evidence" value="ECO:0000315"/>
    <property type="project" value="FlyBase"/>
</dbReference>
<dbReference type="GO" id="GO:0070006">
    <property type="term" value="F:metalloaminopeptidase activity"/>
    <property type="evidence" value="ECO:0000318"/>
    <property type="project" value="GO_Central"/>
</dbReference>
<dbReference type="GO" id="GO:0042277">
    <property type="term" value="F:peptide binding"/>
    <property type="evidence" value="ECO:0000318"/>
    <property type="project" value="GO_Central"/>
</dbReference>
<dbReference type="GO" id="GO:0008270">
    <property type="term" value="F:zinc ion binding"/>
    <property type="evidence" value="ECO:0000318"/>
    <property type="project" value="GO_Central"/>
</dbReference>
<dbReference type="GO" id="GO:0071456">
    <property type="term" value="P:cellular response to hypoxia"/>
    <property type="evidence" value="ECO:0000314"/>
    <property type="project" value="UniProtKB"/>
</dbReference>
<dbReference type="GO" id="GO:0043171">
    <property type="term" value="P:peptide catabolic process"/>
    <property type="evidence" value="ECO:0000318"/>
    <property type="project" value="GO_Central"/>
</dbReference>
<dbReference type="GO" id="GO:1903955">
    <property type="term" value="P:positive regulation of protein targeting to mitochondrion"/>
    <property type="evidence" value="ECO:0007001"/>
    <property type="project" value="ParkinsonsUK-UCL"/>
</dbReference>
<dbReference type="GO" id="GO:0000209">
    <property type="term" value="P:protein polyubiquitination"/>
    <property type="evidence" value="ECO:0000304"/>
    <property type="project" value="Reactome"/>
</dbReference>
<dbReference type="GO" id="GO:0006508">
    <property type="term" value="P:proteolysis"/>
    <property type="evidence" value="ECO:0000318"/>
    <property type="project" value="GO_Central"/>
</dbReference>
<dbReference type="CDD" id="cd09601">
    <property type="entry name" value="M1_APN-Q_like"/>
    <property type="match status" value="1"/>
</dbReference>
<dbReference type="FunFam" id="1.10.390.10:FF:000001">
    <property type="entry name" value="Aminopeptidase"/>
    <property type="match status" value="1"/>
</dbReference>
<dbReference type="FunFam" id="1.25.50.20:FF:000004">
    <property type="entry name" value="Aminopeptidase"/>
    <property type="match status" value="1"/>
</dbReference>
<dbReference type="FunFam" id="2.60.40.1730:FF:000002">
    <property type="entry name" value="Aminopeptidase"/>
    <property type="match status" value="1"/>
</dbReference>
<dbReference type="FunFam" id="2.60.40.1910:FF:000002">
    <property type="entry name" value="Aminopeptidase"/>
    <property type="match status" value="1"/>
</dbReference>
<dbReference type="Gene3D" id="1.25.50.20">
    <property type="match status" value="1"/>
</dbReference>
<dbReference type="Gene3D" id="2.60.40.1910">
    <property type="match status" value="1"/>
</dbReference>
<dbReference type="Gene3D" id="1.10.390.10">
    <property type="entry name" value="Neutral Protease Domain 2"/>
    <property type="match status" value="1"/>
</dbReference>
<dbReference type="Gene3D" id="2.60.40.1730">
    <property type="entry name" value="tricorn interacting facor f3 domain"/>
    <property type="match status" value="1"/>
</dbReference>
<dbReference type="InterPro" id="IPR045357">
    <property type="entry name" value="Aminopeptidase_N-like_N"/>
</dbReference>
<dbReference type="InterPro" id="IPR042097">
    <property type="entry name" value="Aminopeptidase_N-like_N_sf"/>
</dbReference>
<dbReference type="InterPro" id="IPR024571">
    <property type="entry name" value="ERAP1-like_C_dom"/>
</dbReference>
<dbReference type="InterPro" id="IPR034016">
    <property type="entry name" value="M1_APN-typ"/>
</dbReference>
<dbReference type="InterPro" id="IPR001930">
    <property type="entry name" value="Peptidase_M1"/>
</dbReference>
<dbReference type="InterPro" id="IPR050344">
    <property type="entry name" value="Peptidase_M1_aminopeptidases"/>
</dbReference>
<dbReference type="InterPro" id="IPR014782">
    <property type="entry name" value="Peptidase_M1_dom"/>
</dbReference>
<dbReference type="InterPro" id="IPR027268">
    <property type="entry name" value="Peptidase_M4/M1_CTD_sf"/>
</dbReference>
<dbReference type="PANTHER" id="PTHR11533">
    <property type="entry name" value="PROTEASE M1 ZINC METALLOPROTEASE"/>
    <property type="match status" value="1"/>
</dbReference>
<dbReference type="PANTHER" id="PTHR11533:SF174">
    <property type="entry name" value="PUROMYCIN-SENSITIVE AMINOPEPTIDASE-RELATED"/>
    <property type="match status" value="1"/>
</dbReference>
<dbReference type="Pfam" id="PF11838">
    <property type="entry name" value="ERAP1_C"/>
    <property type="match status" value="1"/>
</dbReference>
<dbReference type="Pfam" id="PF01433">
    <property type="entry name" value="Peptidase_M1"/>
    <property type="match status" value="1"/>
</dbReference>
<dbReference type="Pfam" id="PF17900">
    <property type="entry name" value="Peptidase_M1_N"/>
    <property type="match status" value="1"/>
</dbReference>
<dbReference type="PRINTS" id="PR00756">
    <property type="entry name" value="ALADIPTASE"/>
</dbReference>
<dbReference type="SUPFAM" id="SSF63737">
    <property type="entry name" value="Leukotriene A4 hydrolase N-terminal domain"/>
    <property type="match status" value="1"/>
</dbReference>
<dbReference type="SUPFAM" id="SSF55486">
    <property type="entry name" value="Metalloproteases ('zincins'), catalytic domain"/>
    <property type="match status" value="1"/>
</dbReference>
<dbReference type="PROSITE" id="PS00142">
    <property type="entry name" value="ZINC_PROTEASE"/>
    <property type="match status" value="1"/>
</dbReference>
<proteinExistence type="evidence at protein level"/>
<feature type="chain" id="PRO_0000095116" description="Puromycin-sensitive aminopeptidase">
    <location>
        <begin position="1"/>
        <end position="919"/>
    </location>
</feature>
<feature type="short sequence motif" description="Nuclear localization signal" evidence="3">
    <location>
        <begin position="726"/>
        <end position="730"/>
    </location>
</feature>
<feature type="active site" description="Proton acceptor" evidence="4">
    <location>
        <position position="353"/>
    </location>
</feature>
<feature type="binding site" evidence="1">
    <location>
        <position position="180"/>
    </location>
    <ligand>
        <name>substrate</name>
    </ligand>
</feature>
<feature type="binding site" evidence="1">
    <location>
        <begin position="316"/>
        <end position="320"/>
    </location>
    <ligand>
        <name>substrate</name>
    </ligand>
</feature>
<feature type="binding site" evidence="4">
    <location>
        <position position="352"/>
    </location>
    <ligand>
        <name>Zn(2+)</name>
        <dbReference type="ChEBI" id="CHEBI:29105"/>
        <note>catalytic</note>
    </ligand>
</feature>
<feature type="binding site" evidence="4">
    <location>
        <position position="356"/>
    </location>
    <ligand>
        <name>Zn(2+)</name>
        <dbReference type="ChEBI" id="CHEBI:29105"/>
        <note>catalytic</note>
    </ligand>
</feature>
<feature type="binding site" evidence="4">
    <location>
        <position position="375"/>
    </location>
    <ligand>
        <name>Zn(2+)</name>
        <dbReference type="ChEBI" id="CHEBI:29105"/>
        <note>catalytic</note>
    </ligand>
</feature>
<feature type="site" description="Transition state stabilizer" evidence="1">
    <location>
        <position position="438"/>
    </location>
</feature>
<feature type="modified residue" description="3'-nitrotyrosine" evidence="2">
    <location>
        <position position="464"/>
    </location>
</feature>
<feature type="splice variant" id="VSP_056446" description="In isoform 2." evidence="11">
    <location>
        <begin position="1"/>
        <end position="44"/>
    </location>
</feature>
<feature type="splice variant" id="VSP_056447" description="In isoform 2." evidence="11">
    <location>
        <begin position="181"/>
        <end position="216"/>
    </location>
</feature>
<feature type="mutagenesis site" description="Reduces catalytic activity by 25,000-fold to 100,000-fold." evidence="7">
    <original>E</original>
    <variation>A</variation>
    <location>
        <position position="353"/>
    </location>
</feature>
<feature type="mutagenesis site" description="Reduces catalytic activity by 5,000-fold to 15,000-fold." evidence="7">
    <original>E</original>
    <variation>Q</variation>
    <location>
        <position position="353"/>
    </location>
</feature>
<feature type="mutagenesis site" description="Reduces catalytic activity by 300,000-fold to 500,000-fold." evidence="7">
    <original>E</original>
    <variation>V</variation>
    <location>
        <position position="353"/>
    </location>
</feature>
<feature type="mutagenesis site" description="Reduces catalytic activity by 1,000-fold to 2,500-fold." evidence="7">
    <original>Y</original>
    <variation>F</variation>
    <location>
        <position position="438"/>
    </location>
</feature>
<feature type="sequence conflict" description="In Ref. 1; CAA68964." evidence="12" ref="1">
    <original>A</original>
    <variation>P</variation>
    <location>
        <position position="184"/>
    </location>
</feature>
<feature type="strand" evidence="13">
    <location>
        <begin position="57"/>
        <end position="70"/>
    </location>
</feature>
<feature type="turn" evidence="13">
    <location>
        <begin position="71"/>
        <end position="74"/>
    </location>
</feature>
<feature type="strand" evidence="13">
    <location>
        <begin position="75"/>
        <end position="88"/>
    </location>
</feature>
<feature type="strand" evidence="13">
    <location>
        <begin position="91"/>
        <end position="96"/>
    </location>
</feature>
<feature type="strand" evidence="13">
    <location>
        <begin position="101"/>
        <end position="109"/>
    </location>
</feature>
<feature type="strand" evidence="13">
    <location>
        <begin position="119"/>
        <end position="123"/>
    </location>
</feature>
<feature type="turn" evidence="13">
    <location>
        <begin position="124"/>
        <end position="127"/>
    </location>
</feature>
<feature type="strand" evidence="13">
    <location>
        <begin position="128"/>
        <end position="132"/>
    </location>
</feature>
<feature type="strand" evidence="13">
    <location>
        <begin position="139"/>
        <end position="151"/>
    </location>
</feature>
<feature type="strand" evidence="13">
    <location>
        <begin position="153"/>
        <end position="164"/>
    </location>
</feature>
<feature type="strand" evidence="13">
    <location>
        <begin position="172"/>
        <end position="178"/>
    </location>
</feature>
<feature type="turn" evidence="13">
    <location>
        <begin position="180"/>
        <end position="182"/>
    </location>
</feature>
<feature type="helix" evidence="13">
    <location>
        <begin position="184"/>
        <end position="186"/>
    </location>
</feature>
<feature type="strand" evidence="13">
    <location>
        <begin position="198"/>
        <end position="207"/>
    </location>
</feature>
<feature type="strand" evidence="13">
    <location>
        <begin position="210"/>
        <end position="216"/>
    </location>
</feature>
<feature type="strand" evidence="13">
    <location>
        <begin position="218"/>
        <end position="223"/>
    </location>
</feature>
<feature type="strand" evidence="13">
    <location>
        <begin position="230"/>
        <end position="235"/>
    </location>
</feature>
<feature type="helix" evidence="13">
    <location>
        <begin position="243"/>
        <end position="245"/>
    </location>
</feature>
<feature type="strand" evidence="13">
    <location>
        <begin position="248"/>
        <end position="251"/>
    </location>
</feature>
<feature type="strand" evidence="13">
    <location>
        <begin position="253"/>
        <end position="259"/>
    </location>
</feature>
<feature type="strand" evidence="13">
    <location>
        <begin position="265"/>
        <end position="271"/>
    </location>
</feature>
<feature type="helix" evidence="13">
    <location>
        <begin position="275"/>
        <end position="278"/>
    </location>
</feature>
<feature type="helix" evidence="13">
    <location>
        <begin position="279"/>
        <end position="296"/>
    </location>
</feature>
<feature type="strand" evidence="13">
    <location>
        <begin position="301"/>
        <end position="310"/>
    </location>
</feature>
<feature type="strand" evidence="13">
    <location>
        <begin position="316"/>
        <end position="318"/>
    </location>
</feature>
<feature type="strand" evidence="13">
    <location>
        <begin position="323"/>
        <end position="327"/>
    </location>
</feature>
<feature type="helix" evidence="13">
    <location>
        <begin position="328"/>
        <end position="331"/>
    </location>
</feature>
<feature type="turn" evidence="13">
    <location>
        <begin position="335"/>
        <end position="337"/>
    </location>
</feature>
<feature type="helix" evidence="13">
    <location>
        <begin position="342"/>
        <end position="356"/>
    </location>
</feature>
<feature type="turn" evidence="13">
    <location>
        <begin position="360"/>
        <end position="362"/>
    </location>
</feature>
<feature type="strand" evidence="13">
    <location>
        <begin position="363"/>
        <end position="367"/>
    </location>
</feature>
<feature type="helix" evidence="13">
    <location>
        <begin position="368"/>
        <end position="370"/>
    </location>
</feature>
<feature type="helix" evidence="13">
    <location>
        <begin position="371"/>
        <end position="389"/>
    </location>
</feature>
<feature type="helix" evidence="13">
    <location>
        <begin position="391"/>
        <end position="393"/>
    </location>
</feature>
<feature type="helix" evidence="13">
    <location>
        <begin position="395"/>
        <end position="411"/>
    </location>
</feature>
<feature type="strand" evidence="13">
    <location>
        <begin position="413"/>
        <end position="415"/>
    </location>
</feature>
<feature type="helix" evidence="13">
    <location>
        <begin position="429"/>
        <end position="432"/>
    </location>
</feature>
<feature type="helix" evidence="13">
    <location>
        <begin position="435"/>
        <end position="452"/>
    </location>
</feature>
<feature type="helix" evidence="13">
    <location>
        <begin position="454"/>
        <end position="467"/>
    </location>
</feature>
<feature type="strand" evidence="13">
    <location>
        <begin position="471"/>
        <end position="473"/>
    </location>
</feature>
<feature type="helix" evidence="13">
    <location>
        <begin position="475"/>
        <end position="486"/>
    </location>
</feature>
<feature type="helix" evidence="13">
    <location>
        <begin position="490"/>
        <end position="498"/>
    </location>
</feature>
<feature type="strand" evidence="13">
    <location>
        <begin position="504"/>
        <end position="513"/>
    </location>
</feature>
<feature type="strand" evidence="13">
    <location>
        <begin position="516"/>
        <end position="527"/>
    </location>
</feature>
<feature type="strand" evidence="13">
    <location>
        <begin position="542"/>
        <end position="548"/>
    </location>
</feature>
<feature type="strand" evidence="13">
    <location>
        <begin position="556"/>
        <end position="561"/>
    </location>
</feature>
<feature type="strand" evidence="13">
    <location>
        <begin position="563"/>
        <end position="572"/>
    </location>
</feature>
<feature type="strand" evidence="13">
    <location>
        <begin position="579"/>
        <end position="582"/>
    </location>
</feature>
<feature type="helix" evidence="13">
    <location>
        <begin position="583"/>
        <end position="585"/>
    </location>
</feature>
<feature type="strand" evidence="13">
    <location>
        <begin position="587"/>
        <end position="593"/>
    </location>
</feature>
<feature type="helix" evidence="13">
    <location>
        <begin position="595"/>
        <end position="606"/>
    </location>
</feature>
<feature type="helix" evidence="13">
    <location>
        <begin position="612"/>
        <end position="627"/>
    </location>
</feature>
<feature type="helix" evidence="13">
    <location>
        <begin position="633"/>
        <end position="640"/>
    </location>
</feature>
<feature type="helix" evidence="13">
    <location>
        <begin position="641"/>
        <end position="643"/>
    </location>
</feature>
<feature type="helix" evidence="13">
    <location>
        <begin position="649"/>
        <end position="665"/>
    </location>
</feature>
<feature type="helix" evidence="13">
    <location>
        <begin position="666"/>
        <end position="668"/>
    </location>
</feature>
<feature type="helix" evidence="13">
    <location>
        <begin position="672"/>
        <end position="690"/>
    </location>
</feature>
<feature type="helix" evidence="13">
    <location>
        <begin position="700"/>
        <end position="715"/>
    </location>
</feature>
<feature type="helix" evidence="13">
    <location>
        <begin position="719"/>
        <end position="733"/>
    </location>
</feature>
<feature type="helix" evidence="13">
    <location>
        <begin position="744"/>
        <end position="753"/>
    </location>
</feature>
<feature type="helix" evidence="13">
    <location>
        <begin position="757"/>
        <end position="768"/>
    </location>
</feature>
<feature type="helix" evidence="13">
    <location>
        <begin position="773"/>
        <end position="780"/>
    </location>
</feature>
<feature type="helix" evidence="13">
    <location>
        <begin position="783"/>
        <end position="785"/>
    </location>
</feature>
<feature type="helix" evidence="13">
    <location>
        <begin position="789"/>
        <end position="799"/>
    </location>
</feature>
<feature type="helix" evidence="13">
    <location>
        <begin position="806"/>
        <end position="808"/>
    </location>
</feature>
<feature type="helix" evidence="13">
    <location>
        <begin position="809"/>
        <end position="817"/>
    </location>
</feature>
<feature type="helix" evidence="13">
    <location>
        <begin position="821"/>
        <end position="833"/>
    </location>
</feature>
<feature type="helix" evidence="13">
    <location>
        <begin position="835"/>
        <end position="842"/>
    </location>
</feature>
<feature type="helix" evidence="13">
    <location>
        <begin position="846"/>
        <end position="856"/>
    </location>
</feature>
<feature type="helix" evidence="13">
    <location>
        <begin position="862"/>
        <end position="874"/>
    </location>
</feature>
<feature type="helix" evidence="13">
    <location>
        <begin position="878"/>
        <end position="880"/>
    </location>
</feature>
<feature type="helix" evidence="13">
    <location>
        <begin position="881"/>
        <end position="913"/>
    </location>
</feature>
<comment type="function">
    <text evidence="5 6 8 9 10">Aminopeptidase with broad substrate specificity for several peptides. Involved in proteolytic events essential for cell growth and viability. May act as regulator of neuropeptide activity. Plays a role in the antigen-processing pathway for MHC class I molecules. Involved in the N-terminal trimming of cytotoxic T-cell epitope precursors. Digests the poly-Q peptides found in many cellular proteins. Digests tau from normal brain more efficiently than tau from Alzheimer disease brain.</text>
</comment>
<comment type="catalytic activity">
    <reaction>
        <text>Release of an N-terminal amino acid, preferentially alanine, from a wide range of peptides, amides and arylamides.</text>
        <dbReference type="EC" id="3.4.11.14"/>
    </reaction>
</comment>
<comment type="cofactor">
    <cofactor evidence="1">
        <name>Zn(2+)</name>
        <dbReference type="ChEBI" id="CHEBI:29105"/>
    </cofactor>
    <text evidence="1">Binds 1 zinc ion per subunit.</text>
</comment>
<comment type="activity regulation">
    <text evidence="5 8 9">Strongly inhibited by bestatin, leuhistin, actinonin, amastatin, 1,10-phenanthroline, DFP, PCMBS, Zn(2+), Cd(2+), Co(2+), Cu(2+), Hg(2+), EDTA and puromycin. Not inhibited by PMSF, and only slightly inhibited by leupeptin and aprotinin. Activity is increased by Mg(2+) and Ca(2+).</text>
</comment>
<comment type="biophysicochemical properties">
    <kinetics>
        <KM evidence="5 8">2.2 mM for Lys-p-NA</KM>
        <KM evidence="5 8">0.25 mM for Leu-p-NA</KM>
        <KM evidence="5 8">0.27 mM for Ala-p-NA</KM>
        <KM evidence="5 8">0.8 mM for Met-p-NA</KM>
        <KM evidence="5 8">0.47 mM for Pro-p-NA</KM>
        <KM evidence="5 8">0.21 mM for Val-p-NA</KM>
        <KM evidence="5 8">182 uM for Ala-MCA</KM>
        <KM evidence="5 8">189 uM for Met-MCA</KM>
        <KM evidence="5 8">220 uM for Lys-MCA</KM>
        <KM evidence="5 8">91 uM for Leu-MCA</KM>
        <KM evidence="5 8">167 uM for Phe-MCA</KM>
    </kinetics>
    <phDependence>
        <text evidence="5 8">Optimum pH is 7.5. Stable from pH 5.0 to 8.0.</text>
    </phDependence>
    <temperatureDependence>
        <text evidence="5 8">Stable up to 40 degrees Celsius.</text>
    </temperatureDependence>
</comment>
<comment type="subunit">
    <text evidence="5">Monomer.</text>
</comment>
<comment type="subcellular location">
    <subcellularLocation>
        <location evidence="5">Cytoplasm</location>
        <location evidence="5">Cytosol</location>
    </subcellularLocation>
    <subcellularLocation>
        <location evidence="12">Nucleus</location>
    </subcellularLocation>
</comment>
<comment type="alternative products">
    <event type="alternative splicing"/>
    <isoform>
        <id>P55786-1</id>
        <name>1</name>
        <sequence type="displayed"/>
    </isoform>
    <isoform>
        <id>P55786-2</id>
        <name>2</name>
        <sequence type="described" ref="VSP_056446 VSP_056447"/>
    </isoform>
</comment>
<comment type="tissue specificity">
    <text evidence="5">Detected in liver, epithelium of renal tubules, epithelium of small and large intestine, gastric epithelial cells, and alveoli of the lung (at protein level).</text>
</comment>
<comment type="similarity">
    <text evidence="12">Belongs to the peptidase M1 family.</text>
</comment>
<comment type="caution">
    <text evidence="12">It is uncertain whether Met-1 or Met-45 is the initiator. N-terminal sequencing in PubMed:10978616 suggests that Met-45 is used, followed by methionine initiator removal.</text>
</comment>
<comment type="sequence caution" evidence="12">
    <conflict type="erroneous initiation">
        <sequence resource="EMBL-CDS" id="AAH65294"/>
    </conflict>
    <text>Truncated N-terminus.</text>
</comment>
<comment type="sequence caution" evidence="12">
    <conflict type="erroneous initiation">
        <sequence resource="EMBL-CDS" id="CAA68964"/>
    </conflict>
    <text>Truncated N-terminus.</text>
</comment>
<gene>
    <name type="primary">NPEPPS</name>
    <name type="synonym">PSA</name>
</gene>
<organism>
    <name type="scientific">Homo sapiens</name>
    <name type="common">Human</name>
    <dbReference type="NCBI Taxonomy" id="9606"/>
    <lineage>
        <taxon>Eukaryota</taxon>
        <taxon>Metazoa</taxon>
        <taxon>Chordata</taxon>
        <taxon>Craniata</taxon>
        <taxon>Vertebrata</taxon>
        <taxon>Euteleostomi</taxon>
        <taxon>Mammalia</taxon>
        <taxon>Eutheria</taxon>
        <taxon>Euarchontoglires</taxon>
        <taxon>Primates</taxon>
        <taxon>Haplorrhini</taxon>
        <taxon>Catarrhini</taxon>
        <taxon>Hominidae</taxon>
        <taxon>Homo</taxon>
    </lineage>
</organism>
<accession>P55786</accession>
<accession>B7Z463</accession>
<accession>Q6P145</accession>
<accession>Q9NP16</accession>
<accession>Q9UEM2</accession>
<protein>
    <recommendedName>
        <fullName>Puromycin-sensitive aminopeptidase</fullName>
        <shortName>PSA</shortName>
        <ecNumber>3.4.11.14</ecNumber>
    </recommendedName>
    <alternativeName>
        <fullName>Cytosol alanyl aminopeptidase</fullName>
        <shortName>AAP-S</shortName>
    </alternativeName>
</protein>
<evidence type="ECO:0000250" key="1"/>
<evidence type="ECO:0000250" key="2">
    <source>
        <dbReference type="UniProtKB" id="Q11011"/>
    </source>
</evidence>
<evidence type="ECO:0000255" key="3"/>
<evidence type="ECO:0000255" key="4">
    <source>
        <dbReference type="PROSITE-ProRule" id="PRU10095"/>
    </source>
</evidence>
<evidence type="ECO:0000269" key="5">
    <source>
    </source>
</evidence>
<evidence type="ECO:0000269" key="6">
    <source>
    </source>
</evidence>
<evidence type="ECO:0000269" key="7">
    <source>
    </source>
</evidence>
<evidence type="ECO:0000269" key="8">
    <source>
    </source>
</evidence>
<evidence type="ECO:0000269" key="9">
    <source>
    </source>
</evidence>
<evidence type="ECO:0000269" key="10">
    <source>
    </source>
</evidence>
<evidence type="ECO:0000303" key="11">
    <source>
    </source>
</evidence>
<evidence type="ECO:0000305" key="12"/>
<evidence type="ECO:0007829" key="13">
    <source>
        <dbReference type="PDB" id="8SW0"/>
    </source>
</evidence>
<reference key="1">
    <citation type="journal article" date="1997" name="J. Neurochem.">
        <title>Cloning of the human puromycin-sensitive aminopeptidase and evidence for expression in neurons.</title>
        <authorList>
            <person name="Tobler A.R."/>
            <person name="Constam D.B."/>
            <person name="Schmitt-Graeff A."/>
            <person name="Malipiero U."/>
            <person name="Schlapbach R."/>
            <person name="Fontana A."/>
        </authorList>
    </citation>
    <scope>NUCLEOTIDE SEQUENCE [MRNA] (ISOFORM 1)</scope>
    <source>
        <tissue>Fetal brain</tissue>
    </source>
</reference>
<reference key="2">
    <citation type="journal article" date="2004" name="Nat. Genet.">
        <title>Complete sequencing and characterization of 21,243 full-length human cDNAs.</title>
        <authorList>
            <person name="Ota T."/>
            <person name="Suzuki Y."/>
            <person name="Nishikawa T."/>
            <person name="Otsuki T."/>
            <person name="Sugiyama T."/>
            <person name="Irie R."/>
            <person name="Wakamatsu A."/>
            <person name="Hayashi K."/>
            <person name="Sato H."/>
            <person name="Nagai K."/>
            <person name="Kimura K."/>
            <person name="Makita H."/>
            <person name="Sekine M."/>
            <person name="Obayashi M."/>
            <person name="Nishi T."/>
            <person name="Shibahara T."/>
            <person name="Tanaka T."/>
            <person name="Ishii S."/>
            <person name="Yamamoto J."/>
            <person name="Saito K."/>
            <person name="Kawai Y."/>
            <person name="Isono Y."/>
            <person name="Nakamura Y."/>
            <person name="Nagahari K."/>
            <person name="Murakami K."/>
            <person name="Yasuda T."/>
            <person name="Iwayanagi T."/>
            <person name="Wagatsuma M."/>
            <person name="Shiratori A."/>
            <person name="Sudo H."/>
            <person name="Hosoiri T."/>
            <person name="Kaku Y."/>
            <person name="Kodaira H."/>
            <person name="Kondo H."/>
            <person name="Sugawara M."/>
            <person name="Takahashi M."/>
            <person name="Kanda K."/>
            <person name="Yokoi T."/>
            <person name="Furuya T."/>
            <person name="Kikkawa E."/>
            <person name="Omura Y."/>
            <person name="Abe K."/>
            <person name="Kamihara K."/>
            <person name="Katsuta N."/>
            <person name="Sato K."/>
            <person name="Tanikawa M."/>
            <person name="Yamazaki M."/>
            <person name="Ninomiya K."/>
            <person name="Ishibashi T."/>
            <person name="Yamashita H."/>
            <person name="Murakawa K."/>
            <person name="Fujimori K."/>
            <person name="Tanai H."/>
            <person name="Kimata M."/>
            <person name="Watanabe M."/>
            <person name="Hiraoka S."/>
            <person name="Chiba Y."/>
            <person name="Ishida S."/>
            <person name="Ono Y."/>
            <person name="Takiguchi S."/>
            <person name="Watanabe S."/>
            <person name="Yosida M."/>
            <person name="Hotuta T."/>
            <person name="Kusano J."/>
            <person name="Kanehori K."/>
            <person name="Takahashi-Fujii A."/>
            <person name="Hara H."/>
            <person name="Tanase T.-O."/>
            <person name="Nomura Y."/>
            <person name="Togiya S."/>
            <person name="Komai F."/>
            <person name="Hara R."/>
            <person name="Takeuchi K."/>
            <person name="Arita M."/>
            <person name="Imose N."/>
            <person name="Musashino K."/>
            <person name="Yuuki H."/>
            <person name="Oshima A."/>
            <person name="Sasaki N."/>
            <person name="Aotsuka S."/>
            <person name="Yoshikawa Y."/>
            <person name="Matsunawa H."/>
            <person name="Ichihara T."/>
            <person name="Shiohata N."/>
            <person name="Sano S."/>
            <person name="Moriya S."/>
            <person name="Momiyama H."/>
            <person name="Satoh N."/>
            <person name="Takami S."/>
            <person name="Terashima Y."/>
            <person name="Suzuki O."/>
            <person name="Nakagawa S."/>
            <person name="Senoh A."/>
            <person name="Mizoguchi H."/>
            <person name="Goto Y."/>
            <person name="Shimizu F."/>
            <person name="Wakebe H."/>
            <person name="Hishigaki H."/>
            <person name="Watanabe T."/>
            <person name="Sugiyama A."/>
            <person name="Takemoto M."/>
            <person name="Kawakami B."/>
            <person name="Yamazaki M."/>
            <person name="Watanabe K."/>
            <person name="Kumagai A."/>
            <person name="Itakura S."/>
            <person name="Fukuzumi Y."/>
            <person name="Fujimori Y."/>
            <person name="Komiyama M."/>
            <person name="Tashiro H."/>
            <person name="Tanigami A."/>
            <person name="Fujiwara T."/>
            <person name="Ono T."/>
            <person name="Yamada K."/>
            <person name="Fujii Y."/>
            <person name="Ozaki K."/>
            <person name="Hirao M."/>
            <person name="Ohmori Y."/>
            <person name="Kawabata A."/>
            <person name="Hikiji T."/>
            <person name="Kobatake N."/>
            <person name="Inagaki H."/>
            <person name="Ikema Y."/>
            <person name="Okamoto S."/>
            <person name="Okitani R."/>
            <person name="Kawakami T."/>
            <person name="Noguchi S."/>
            <person name="Itoh T."/>
            <person name="Shigeta K."/>
            <person name="Senba T."/>
            <person name="Matsumura K."/>
            <person name="Nakajima Y."/>
            <person name="Mizuno T."/>
            <person name="Morinaga M."/>
            <person name="Sasaki M."/>
            <person name="Togashi T."/>
            <person name="Oyama M."/>
            <person name="Hata H."/>
            <person name="Watanabe M."/>
            <person name="Komatsu T."/>
            <person name="Mizushima-Sugano J."/>
            <person name="Satoh T."/>
            <person name="Shirai Y."/>
            <person name="Takahashi Y."/>
            <person name="Nakagawa K."/>
            <person name="Okumura K."/>
            <person name="Nagase T."/>
            <person name="Nomura N."/>
            <person name="Kikuchi H."/>
            <person name="Masuho Y."/>
            <person name="Yamashita R."/>
            <person name="Nakai K."/>
            <person name="Yada T."/>
            <person name="Nakamura Y."/>
            <person name="Ohara O."/>
            <person name="Isogai T."/>
            <person name="Sugano S."/>
        </authorList>
    </citation>
    <scope>NUCLEOTIDE SEQUENCE [LARGE SCALE MRNA] (ISOFORM 2)</scope>
    <source>
        <tissue>Tongue</tissue>
    </source>
</reference>
<reference key="3">
    <citation type="journal article" date="2006" name="Nature">
        <title>DNA sequence of human chromosome 17 and analysis of rearrangement in the human lineage.</title>
        <authorList>
            <person name="Zody M.C."/>
            <person name="Garber M."/>
            <person name="Adams D.J."/>
            <person name="Sharpe T."/>
            <person name="Harrow J."/>
            <person name="Lupski J.R."/>
            <person name="Nicholson C."/>
            <person name="Searle S.M."/>
            <person name="Wilming L."/>
            <person name="Young S.K."/>
            <person name="Abouelleil A."/>
            <person name="Allen N.R."/>
            <person name="Bi W."/>
            <person name="Bloom T."/>
            <person name="Borowsky M.L."/>
            <person name="Bugalter B.E."/>
            <person name="Butler J."/>
            <person name="Chang J.L."/>
            <person name="Chen C.-K."/>
            <person name="Cook A."/>
            <person name="Corum B."/>
            <person name="Cuomo C.A."/>
            <person name="de Jong P.J."/>
            <person name="DeCaprio D."/>
            <person name="Dewar K."/>
            <person name="FitzGerald M."/>
            <person name="Gilbert J."/>
            <person name="Gibson R."/>
            <person name="Gnerre S."/>
            <person name="Goldstein S."/>
            <person name="Grafham D.V."/>
            <person name="Grocock R."/>
            <person name="Hafez N."/>
            <person name="Hagopian D.S."/>
            <person name="Hart E."/>
            <person name="Norman C.H."/>
            <person name="Humphray S."/>
            <person name="Jaffe D.B."/>
            <person name="Jones M."/>
            <person name="Kamal M."/>
            <person name="Khodiyar V.K."/>
            <person name="LaButti K."/>
            <person name="Laird G."/>
            <person name="Lehoczky J."/>
            <person name="Liu X."/>
            <person name="Lokyitsang T."/>
            <person name="Loveland J."/>
            <person name="Lui A."/>
            <person name="Macdonald P."/>
            <person name="Major J.E."/>
            <person name="Matthews L."/>
            <person name="Mauceli E."/>
            <person name="McCarroll S.A."/>
            <person name="Mihalev A.H."/>
            <person name="Mudge J."/>
            <person name="Nguyen C."/>
            <person name="Nicol R."/>
            <person name="O'Leary S.B."/>
            <person name="Osoegawa K."/>
            <person name="Schwartz D.C."/>
            <person name="Shaw-Smith C."/>
            <person name="Stankiewicz P."/>
            <person name="Steward C."/>
            <person name="Swarbreck D."/>
            <person name="Venkataraman V."/>
            <person name="Whittaker C.A."/>
            <person name="Yang X."/>
            <person name="Zimmer A.R."/>
            <person name="Bradley A."/>
            <person name="Hubbard T."/>
            <person name="Birren B.W."/>
            <person name="Rogers J."/>
            <person name="Lander E.S."/>
            <person name="Nusbaum C."/>
        </authorList>
    </citation>
    <scope>NUCLEOTIDE SEQUENCE [LARGE SCALE GENOMIC DNA]</scope>
</reference>
<reference key="4">
    <citation type="journal article" date="2004" name="Genome Res.">
        <title>The status, quality, and expansion of the NIH full-length cDNA project: the Mammalian Gene Collection (MGC).</title>
        <authorList>
            <consortium name="The MGC Project Team"/>
        </authorList>
    </citation>
    <scope>NUCLEOTIDE SEQUENCE [LARGE SCALE MRNA] OF 31-919 (ISOFORM 1)</scope>
    <source>
        <tissue>Lung</tissue>
    </source>
</reference>
<reference key="5">
    <citation type="journal article" date="2001" name="Cytogenet. Cell Genet.">
        <title>Human puromycin-sensitive aminopeptidase: cloning of 3' UTR, evidence for a polymorphism at a.a. 140 and refined chromosomal localization to 17q21.</title>
        <authorList>
            <person name="Bauer W.O."/>
            <person name="Nanda I."/>
            <person name="Beck G."/>
            <person name="Schmid M."/>
            <person name="Jakob F."/>
        </authorList>
    </citation>
    <scope>NUCLEOTIDE SEQUENCE [MRNA] OF 45-919 (ISOFORM 1)</scope>
    <source>
        <tissue>Skeletal muscle</tissue>
    </source>
</reference>
<reference key="6">
    <citation type="journal article" date="1999" name="Biochem. Biophys. Res. Commun.">
        <title>Cloning and analysis of the gene for the human puromycin-sensitive aminopeptidase.</title>
        <authorList>
            <person name="Thompson M.W."/>
            <person name="Tobler A."/>
            <person name="Fontana A."/>
            <person name="Hersh L.B."/>
        </authorList>
    </citation>
    <scope>NUCLEOTIDE SEQUENCE [GENOMIC DNA] OF 45-85</scope>
</reference>
<reference key="7">
    <citation type="journal article" date="2000" name="Forensic Sci. Int.">
        <title>Puromycin-sensitive alanyl aminopeptidase from human liver cytosol: purification and characterization.</title>
        <authorList>
            <person name="Yamamoto Y."/>
            <person name="Li Y.H."/>
            <person name="Ushiyama I."/>
            <person name="Nishimura A."/>
            <person name="Ohkubo I."/>
            <person name="Nishi K."/>
        </authorList>
    </citation>
    <scope>PROTEIN SEQUENCE OF 46-105</scope>
    <scope>FUNCTION</scope>
    <scope>ACTIVITY REGULATION</scope>
    <scope>BIOPHYSICOCHEMICAL PROPERTIES</scope>
    <scope>SUBUNIT</scope>
    <scope>SUBCELLULAR LOCATION</scope>
    <scope>TISSUE SPECIFICITY</scope>
    <source>
        <tissue>Liver</tissue>
    </source>
</reference>
<reference key="8">
    <citation type="journal article" date="2000" name="Nat. Immunol.">
        <title>Two new proteases in the MHC class I processing pathway.</title>
        <authorList>
            <person name="Stoltze L."/>
            <person name="Schirle M."/>
            <person name="Schwarz G."/>
            <person name="Schroter C."/>
            <person name="Thompson M.W."/>
            <person name="Hersh L.B."/>
            <person name="Kalbacher H."/>
            <person name="Stevanovic S."/>
            <person name="Rammensee H.G."/>
            <person name="Schild H."/>
        </authorList>
    </citation>
    <scope>FUNCTION</scope>
</reference>
<reference key="9">
    <citation type="journal article" date="2003" name="Arch. Biochem. Biophys.">
        <title>Mutation of active site residues of the puromycin-sensitive aminopeptidase: conversion of the enzyme into a catalytically inactive binding protein.</title>
        <authorList>
            <person name="Thompson M.W."/>
            <person name="Govindaswami M."/>
            <person name="Hersh L.B."/>
        </authorList>
    </citation>
    <scope>MUTAGENESIS OF GLU-353 AND TYR-438</scope>
    <scope>ACTIVE SITE</scope>
</reference>
<reference key="10">
    <citation type="journal article" date="2006" name="Biochemistry">
        <title>Degradation of tau protein by puromycin-sensitive aminopeptidase in vitro.</title>
        <authorList>
            <person name="Sengupta S."/>
            <person name="Horowitz P.M."/>
            <person name="Karsten S.L."/>
            <person name="Jackson G.R."/>
            <person name="Geschwind D.H."/>
            <person name="Fu Y."/>
            <person name="Berry R.W."/>
            <person name="Binder L.I."/>
        </authorList>
    </citation>
    <scope>FUNCTION</scope>
    <scope>ACTIVITY REGULATION</scope>
    <scope>BIOPHYSICOCHEMICAL PROPERTIES</scope>
</reference>
<reference key="11">
    <citation type="journal article" date="2007" name="EMBO J.">
        <title>Puromycin-sensitive aminopeptidase is the major peptidase responsible for digesting polyglutamine sequences released by proteasomes during protein degradation.</title>
        <authorList>
            <person name="Bhutani N."/>
            <person name="Venkatraman P."/>
            <person name="Goldberg A.L."/>
        </authorList>
    </citation>
    <scope>FUNCTION</scope>
    <scope>ACTIVITY REGULATION</scope>
</reference>
<reference key="12">
    <citation type="journal article" date="2009" name="J. Immunol.">
        <title>Cytosolic aminopeptidases influence MHC class I-mediated antigen presentation in an allele-dependent manner.</title>
        <authorList>
            <person name="Kim E."/>
            <person name="Kwak H."/>
            <person name="Ahn K."/>
        </authorList>
    </citation>
    <scope>FUNCTION</scope>
</reference>
<reference key="13">
    <citation type="journal article" date="2011" name="BMC Syst. Biol.">
        <title>Initial characterization of the human central proteome.</title>
        <authorList>
            <person name="Burkard T.R."/>
            <person name="Planyavsky M."/>
            <person name="Kaupe I."/>
            <person name="Breitwieser F.P."/>
            <person name="Buerckstuemmer T."/>
            <person name="Bennett K.L."/>
            <person name="Superti-Furga G."/>
            <person name="Colinge J."/>
        </authorList>
    </citation>
    <scope>IDENTIFICATION BY MASS SPECTROMETRY [LARGE SCALE ANALYSIS]</scope>
</reference>
<reference key="14">
    <citation type="journal article" date="2014" name="J. Proteomics">
        <title>An enzyme assisted RP-RPLC approach for in-depth analysis of human liver phosphoproteome.</title>
        <authorList>
            <person name="Bian Y."/>
            <person name="Song C."/>
            <person name="Cheng K."/>
            <person name="Dong M."/>
            <person name="Wang F."/>
            <person name="Huang J."/>
            <person name="Sun D."/>
            <person name="Wang L."/>
            <person name="Ye M."/>
            <person name="Zou H."/>
        </authorList>
    </citation>
    <scope>IDENTIFICATION BY MASS SPECTROMETRY [LARGE SCALE ANALYSIS]</scope>
    <source>
        <tissue>Liver</tissue>
    </source>
</reference>
<sequence>MWLAAAAPSLARRLLFLGPPPPPLLLLVFSRSSRRRLHSLGLAAMPEKRPFERLPADVSPINYSLCLKPDLLDFTFEGKLEAAAQVRQATNQIVMNCADIDIITASYAPEGDEEIHATGFNYQNEDEKVTLSFPSTLQTGTGTLKIDFVGELNDKMKGFYRSKYTTPSGEVRYAAVTQFEATDARRAFPCWDEPAIKATFDISLVVPKDRVALSNMNVIDRKPYPDDENLVEVKFARTPVMSTYLVAFVVGEYDFVETRSKDGVCVRVYTPVGKAEQGKFALEVAAKTLPFYKDYFNVPYPLPKIDLIAIADFAAGAMENWGLVTYRETALLIDPKNSCSSSRQWVALVVGHELAHQWFGNLVTMEWWTHLWLNEGFASWIEYLCVDHCFPEYDIWTQFVSADYTRAQELDALDNSHPIEVSVGHPSEVDEIFDAISYSKGASVIRMLHDYIGDKDFKKGMNMYLTKFQQKNAATEDLWESLENASGKPIAAVMNTWTKQMGFPLIYVEAEQVEDDRLLRLSQKKFCAGGSYVGEDCPQWMVPITISTSEDPNQAKLKILMDKPEMNVVLKNVKPDQWVKLNLGTVGFYRTQYSSAMLESLLPGIRDLSLPPVDRLGLQNDLFSLARAGIISTVEVLKVMEAFVNEPNYTVWSDLSCNLGILSTLLSHTDFYEEIQEFVKDVFSPIGERLGWDPKPGEGHLDALLRGLVLGKLGKAGHKATLEEARRRFKDHVEGKQILSADLRSPVYLTVLKHGDGTTLDIMLKLHKQADMQEEKNRIERVLGATLLPDLIQKVLTFALSEEVRPQDTVSVIGGVAGGSKHGRKAAWKFIKDNWEELYNRYQGGFLISRLIKLSVEGFAVDKMAGEVKAFFESHPAPSAERTIQQCCENILLNAAWLKRDAESIHQYLLQRKASPPTV</sequence>
<keyword id="KW-0002">3D-structure</keyword>
<keyword id="KW-0025">Alternative splicing</keyword>
<keyword id="KW-0031">Aminopeptidase</keyword>
<keyword id="KW-0963">Cytoplasm</keyword>
<keyword id="KW-0903">Direct protein sequencing</keyword>
<keyword id="KW-0378">Hydrolase</keyword>
<keyword id="KW-0479">Metal-binding</keyword>
<keyword id="KW-0482">Metalloprotease</keyword>
<keyword id="KW-0944">Nitration</keyword>
<keyword id="KW-0539">Nucleus</keyword>
<keyword id="KW-0645">Protease</keyword>
<keyword id="KW-1267">Proteomics identification</keyword>
<keyword id="KW-1185">Reference proteome</keyword>
<keyword id="KW-0862">Zinc</keyword>
<name>PSA_HUMAN</name>